<organism>
    <name type="scientific">Homo sapiens</name>
    <name type="common">Human</name>
    <dbReference type="NCBI Taxonomy" id="9606"/>
    <lineage>
        <taxon>Eukaryota</taxon>
        <taxon>Metazoa</taxon>
        <taxon>Chordata</taxon>
        <taxon>Craniata</taxon>
        <taxon>Vertebrata</taxon>
        <taxon>Euteleostomi</taxon>
        <taxon>Mammalia</taxon>
        <taxon>Eutheria</taxon>
        <taxon>Euarchontoglires</taxon>
        <taxon>Primates</taxon>
        <taxon>Haplorrhini</taxon>
        <taxon>Catarrhini</taxon>
        <taxon>Hominidae</taxon>
        <taxon>Homo</taxon>
    </lineage>
</organism>
<reference key="1">
    <citation type="journal article" date="2000" name="J. Biol. Chem.">
        <title>Cloning and expression of a novel MAPKK-like protein kinase, lymphokine-activated killer T-cell-originated protein kinase, specifically expressed in the testis and activated lymphoid cells.</title>
        <authorList>
            <person name="Abe Y."/>
            <person name="Matsumoto S."/>
            <person name="Kito K."/>
            <person name="Ueda N."/>
        </authorList>
    </citation>
    <scope>NUCLEOTIDE SEQUENCE [MRNA] (ISOFORM 1)</scope>
    <scope>FUNCTION</scope>
    <scope>PHOSPHORYLATION</scope>
    <scope>TISSUE SPECIFICITY</scope>
    <source>
        <tissue>Lymphoid tissue</tissue>
    </source>
</reference>
<reference key="2">
    <citation type="journal article" date="2000" name="Proc. Natl. Acad. Sci. U.S.A.">
        <title>Characterization of PDZ-binding kinase, a mitotic kinase.</title>
        <authorList>
            <person name="Gaudet S."/>
            <person name="Branton D."/>
            <person name="Lue R.A."/>
        </authorList>
    </citation>
    <scope>NUCLEOTIDE SEQUENCE [MRNA] (ISOFORM 1)</scope>
    <scope>PHOSPHORYLATION</scope>
    <scope>MUTAGENESIS OF 64-LEU-LEU-65; THR-320 AND VAL-322</scope>
    <scope>INTERACTION WITH DLG1</scope>
    <scope>VARIANT SER-107</scope>
</reference>
<reference key="3">
    <citation type="journal article" date="2001" name="Int. J. Biochem. Cell Biol.">
        <title>PDZ-binding kinase participates in spermatogenesis.</title>
        <authorList>
            <person name="Zhao S."/>
            <person name="Dai J."/>
            <person name="Zhao W."/>
            <person name="Xia F."/>
            <person name="Zhou Z."/>
            <person name="Wang W."/>
            <person name="Gu S."/>
            <person name="Ying K."/>
            <person name="Xie Y."/>
            <person name="Mao Y."/>
        </authorList>
    </citation>
    <scope>NUCLEOTIDE SEQUENCE [MRNA] (ISOFORM 1)</scope>
    <scope>TISSUE SPECIFICITY</scope>
    <scope>VARIANT SER-107</scope>
    <source>
        <tissue>Fetal brain</tissue>
    </source>
</reference>
<reference key="4">
    <citation type="journal article" date="2004" name="Nat. Genet.">
        <title>Complete sequencing and characterization of 21,243 full-length human cDNAs.</title>
        <authorList>
            <person name="Ota T."/>
            <person name="Suzuki Y."/>
            <person name="Nishikawa T."/>
            <person name="Otsuki T."/>
            <person name="Sugiyama T."/>
            <person name="Irie R."/>
            <person name="Wakamatsu A."/>
            <person name="Hayashi K."/>
            <person name="Sato H."/>
            <person name="Nagai K."/>
            <person name="Kimura K."/>
            <person name="Makita H."/>
            <person name="Sekine M."/>
            <person name="Obayashi M."/>
            <person name="Nishi T."/>
            <person name="Shibahara T."/>
            <person name="Tanaka T."/>
            <person name="Ishii S."/>
            <person name="Yamamoto J."/>
            <person name="Saito K."/>
            <person name="Kawai Y."/>
            <person name="Isono Y."/>
            <person name="Nakamura Y."/>
            <person name="Nagahari K."/>
            <person name="Murakami K."/>
            <person name="Yasuda T."/>
            <person name="Iwayanagi T."/>
            <person name="Wagatsuma M."/>
            <person name="Shiratori A."/>
            <person name="Sudo H."/>
            <person name="Hosoiri T."/>
            <person name="Kaku Y."/>
            <person name="Kodaira H."/>
            <person name="Kondo H."/>
            <person name="Sugawara M."/>
            <person name="Takahashi M."/>
            <person name="Kanda K."/>
            <person name="Yokoi T."/>
            <person name="Furuya T."/>
            <person name="Kikkawa E."/>
            <person name="Omura Y."/>
            <person name="Abe K."/>
            <person name="Kamihara K."/>
            <person name="Katsuta N."/>
            <person name="Sato K."/>
            <person name="Tanikawa M."/>
            <person name="Yamazaki M."/>
            <person name="Ninomiya K."/>
            <person name="Ishibashi T."/>
            <person name="Yamashita H."/>
            <person name="Murakawa K."/>
            <person name="Fujimori K."/>
            <person name="Tanai H."/>
            <person name="Kimata M."/>
            <person name="Watanabe M."/>
            <person name="Hiraoka S."/>
            <person name="Chiba Y."/>
            <person name="Ishida S."/>
            <person name="Ono Y."/>
            <person name="Takiguchi S."/>
            <person name="Watanabe S."/>
            <person name="Yosida M."/>
            <person name="Hotuta T."/>
            <person name="Kusano J."/>
            <person name="Kanehori K."/>
            <person name="Takahashi-Fujii A."/>
            <person name="Hara H."/>
            <person name="Tanase T.-O."/>
            <person name="Nomura Y."/>
            <person name="Togiya S."/>
            <person name="Komai F."/>
            <person name="Hara R."/>
            <person name="Takeuchi K."/>
            <person name="Arita M."/>
            <person name="Imose N."/>
            <person name="Musashino K."/>
            <person name="Yuuki H."/>
            <person name="Oshima A."/>
            <person name="Sasaki N."/>
            <person name="Aotsuka S."/>
            <person name="Yoshikawa Y."/>
            <person name="Matsunawa H."/>
            <person name="Ichihara T."/>
            <person name="Shiohata N."/>
            <person name="Sano S."/>
            <person name="Moriya S."/>
            <person name="Momiyama H."/>
            <person name="Satoh N."/>
            <person name="Takami S."/>
            <person name="Terashima Y."/>
            <person name="Suzuki O."/>
            <person name="Nakagawa S."/>
            <person name="Senoh A."/>
            <person name="Mizoguchi H."/>
            <person name="Goto Y."/>
            <person name="Shimizu F."/>
            <person name="Wakebe H."/>
            <person name="Hishigaki H."/>
            <person name="Watanabe T."/>
            <person name="Sugiyama A."/>
            <person name="Takemoto M."/>
            <person name="Kawakami B."/>
            <person name="Yamazaki M."/>
            <person name="Watanabe K."/>
            <person name="Kumagai A."/>
            <person name="Itakura S."/>
            <person name="Fukuzumi Y."/>
            <person name="Fujimori Y."/>
            <person name="Komiyama M."/>
            <person name="Tashiro H."/>
            <person name="Tanigami A."/>
            <person name="Fujiwara T."/>
            <person name="Ono T."/>
            <person name="Yamada K."/>
            <person name="Fujii Y."/>
            <person name="Ozaki K."/>
            <person name="Hirao M."/>
            <person name="Ohmori Y."/>
            <person name="Kawabata A."/>
            <person name="Hikiji T."/>
            <person name="Kobatake N."/>
            <person name="Inagaki H."/>
            <person name="Ikema Y."/>
            <person name="Okamoto S."/>
            <person name="Okitani R."/>
            <person name="Kawakami T."/>
            <person name="Noguchi S."/>
            <person name="Itoh T."/>
            <person name="Shigeta K."/>
            <person name="Senba T."/>
            <person name="Matsumura K."/>
            <person name="Nakajima Y."/>
            <person name="Mizuno T."/>
            <person name="Morinaga M."/>
            <person name="Sasaki M."/>
            <person name="Togashi T."/>
            <person name="Oyama M."/>
            <person name="Hata H."/>
            <person name="Watanabe M."/>
            <person name="Komatsu T."/>
            <person name="Mizushima-Sugano J."/>
            <person name="Satoh T."/>
            <person name="Shirai Y."/>
            <person name="Takahashi Y."/>
            <person name="Nakagawa K."/>
            <person name="Okumura K."/>
            <person name="Nagase T."/>
            <person name="Nomura N."/>
            <person name="Kikuchi H."/>
            <person name="Masuho Y."/>
            <person name="Yamashita R."/>
            <person name="Nakai K."/>
            <person name="Yada T."/>
            <person name="Nakamura Y."/>
            <person name="Ohara O."/>
            <person name="Isogai T."/>
            <person name="Sugano S."/>
        </authorList>
    </citation>
    <scope>NUCLEOTIDE SEQUENCE [LARGE SCALE MRNA] (ISOFORMS 1 AND 2)</scope>
    <scope>VARIANT SER-107</scope>
    <source>
        <tissue>Embryo</tissue>
        <tissue>Testis</tissue>
    </source>
</reference>
<reference key="5">
    <citation type="journal article" date="2006" name="Nature">
        <title>DNA sequence and analysis of human chromosome 8.</title>
        <authorList>
            <person name="Nusbaum C."/>
            <person name="Mikkelsen T.S."/>
            <person name="Zody M.C."/>
            <person name="Asakawa S."/>
            <person name="Taudien S."/>
            <person name="Garber M."/>
            <person name="Kodira C.D."/>
            <person name="Schueler M.G."/>
            <person name="Shimizu A."/>
            <person name="Whittaker C.A."/>
            <person name="Chang J.L."/>
            <person name="Cuomo C.A."/>
            <person name="Dewar K."/>
            <person name="FitzGerald M.G."/>
            <person name="Yang X."/>
            <person name="Allen N.R."/>
            <person name="Anderson S."/>
            <person name="Asakawa T."/>
            <person name="Blechschmidt K."/>
            <person name="Bloom T."/>
            <person name="Borowsky M.L."/>
            <person name="Butler J."/>
            <person name="Cook A."/>
            <person name="Corum B."/>
            <person name="DeArellano K."/>
            <person name="DeCaprio D."/>
            <person name="Dooley K.T."/>
            <person name="Dorris L. III"/>
            <person name="Engels R."/>
            <person name="Gloeckner G."/>
            <person name="Hafez N."/>
            <person name="Hagopian D.S."/>
            <person name="Hall J.L."/>
            <person name="Ishikawa S.K."/>
            <person name="Jaffe D.B."/>
            <person name="Kamat A."/>
            <person name="Kudoh J."/>
            <person name="Lehmann R."/>
            <person name="Lokitsang T."/>
            <person name="Macdonald P."/>
            <person name="Major J.E."/>
            <person name="Matthews C.D."/>
            <person name="Mauceli E."/>
            <person name="Menzel U."/>
            <person name="Mihalev A.H."/>
            <person name="Minoshima S."/>
            <person name="Murayama Y."/>
            <person name="Naylor J.W."/>
            <person name="Nicol R."/>
            <person name="Nguyen C."/>
            <person name="O'Leary S.B."/>
            <person name="O'Neill K."/>
            <person name="Parker S.C.J."/>
            <person name="Polley A."/>
            <person name="Raymond C.K."/>
            <person name="Reichwald K."/>
            <person name="Rodriguez J."/>
            <person name="Sasaki T."/>
            <person name="Schilhabel M."/>
            <person name="Siddiqui R."/>
            <person name="Smith C.L."/>
            <person name="Sneddon T.P."/>
            <person name="Talamas J.A."/>
            <person name="Tenzin P."/>
            <person name="Topham K."/>
            <person name="Venkataraman V."/>
            <person name="Wen G."/>
            <person name="Yamazaki S."/>
            <person name="Young S.K."/>
            <person name="Zeng Q."/>
            <person name="Zimmer A.R."/>
            <person name="Rosenthal A."/>
            <person name="Birren B.W."/>
            <person name="Platzer M."/>
            <person name="Shimizu N."/>
            <person name="Lander E.S."/>
        </authorList>
    </citation>
    <scope>NUCLEOTIDE SEQUENCE [LARGE SCALE GENOMIC DNA]</scope>
</reference>
<reference key="6">
    <citation type="submission" date="2005-09" db="EMBL/GenBank/DDBJ databases">
        <authorList>
            <person name="Mural R.J."/>
            <person name="Istrail S."/>
            <person name="Sutton G.G."/>
            <person name="Florea L."/>
            <person name="Halpern A.L."/>
            <person name="Mobarry C.M."/>
            <person name="Lippert R."/>
            <person name="Walenz B."/>
            <person name="Shatkay H."/>
            <person name="Dew I."/>
            <person name="Miller J.R."/>
            <person name="Flanigan M.J."/>
            <person name="Edwards N.J."/>
            <person name="Bolanos R."/>
            <person name="Fasulo D."/>
            <person name="Halldorsson B.V."/>
            <person name="Hannenhalli S."/>
            <person name="Turner R."/>
            <person name="Yooseph S."/>
            <person name="Lu F."/>
            <person name="Nusskern D.R."/>
            <person name="Shue B.C."/>
            <person name="Zheng X.H."/>
            <person name="Zhong F."/>
            <person name="Delcher A.L."/>
            <person name="Huson D.H."/>
            <person name="Kravitz S.A."/>
            <person name="Mouchard L."/>
            <person name="Reinert K."/>
            <person name="Remington K.A."/>
            <person name="Clark A.G."/>
            <person name="Waterman M.S."/>
            <person name="Eichler E.E."/>
            <person name="Adams M.D."/>
            <person name="Hunkapiller M.W."/>
            <person name="Myers E.W."/>
            <person name="Venter J.C."/>
        </authorList>
    </citation>
    <scope>NUCLEOTIDE SEQUENCE [LARGE SCALE GENOMIC DNA]</scope>
</reference>
<reference key="7">
    <citation type="journal article" date="2004" name="Genome Res.">
        <title>The status, quality, and expansion of the NIH full-length cDNA project: the Mammalian Gene Collection (MGC).</title>
        <authorList>
            <consortium name="The MGC Project Team"/>
        </authorList>
    </citation>
    <scope>NUCLEOTIDE SEQUENCE [LARGE SCALE MRNA] (ISOFORM 1)</scope>
    <source>
        <tissue>Brain</tissue>
    </source>
</reference>
<reference key="8">
    <citation type="journal article" date="2007" name="Biochem. Biophys. Res. Commun.">
        <title>Attenuation of DNA damage checkpoint by PBK, a novel mitotic kinase, involves protein-protein interaction with tumor suppressor p53.</title>
        <authorList>
            <person name="Nandi A.K."/>
            <person name="Ford T."/>
            <person name="Fleksher D."/>
            <person name="Neuman B."/>
            <person name="Rapoport A.P."/>
        </authorList>
    </citation>
    <scope>FUNCTION</scope>
    <scope>INTERACTION WITH TP53</scope>
    <scope>MUTAGENESIS OF THR-9</scope>
</reference>
<reference key="9">
    <citation type="journal article" date="2007" name="J. Proteome Res.">
        <title>Improved titanium dioxide enrichment of phosphopeptides from HeLa cells and high confident phosphopeptide identification by cross-validation of MS/MS and MS/MS/MS spectra.</title>
        <authorList>
            <person name="Yu L.R."/>
            <person name="Zhu Z."/>
            <person name="Chan K.C."/>
            <person name="Issaq H.J."/>
            <person name="Dimitrov D.S."/>
            <person name="Veenstra T.D."/>
        </authorList>
    </citation>
    <scope>IDENTIFICATION BY MASS SPECTROMETRY [LARGE SCALE ANALYSIS]</scope>
    <source>
        <tissue>Cervix carcinoma</tissue>
    </source>
</reference>
<reference key="10">
    <citation type="journal article" date="2008" name="Proc. Natl. Acad. Sci. U.S.A.">
        <title>A quantitative atlas of mitotic phosphorylation.</title>
        <authorList>
            <person name="Dephoure N."/>
            <person name="Zhou C."/>
            <person name="Villen J."/>
            <person name="Beausoleil S.A."/>
            <person name="Bakalarski C.E."/>
            <person name="Elledge S.J."/>
            <person name="Gygi S.P."/>
        </authorList>
    </citation>
    <scope>PHOSPHORYLATION [LARGE SCALE ANALYSIS] AT THR-24; SER-32 AND SER-59</scope>
    <scope>IDENTIFICATION BY MASS SPECTROMETRY [LARGE SCALE ANALYSIS]</scope>
    <source>
        <tissue>Cervix carcinoma</tissue>
    </source>
</reference>
<reference key="11">
    <citation type="journal article" date="2009" name="Anal. Chem.">
        <title>Lys-N and trypsin cover complementary parts of the phosphoproteome in a refined SCX-based approach.</title>
        <authorList>
            <person name="Gauci S."/>
            <person name="Helbig A.O."/>
            <person name="Slijper M."/>
            <person name="Krijgsveld J."/>
            <person name="Heck A.J."/>
            <person name="Mohammed S."/>
        </authorList>
    </citation>
    <scope>ACETYLATION [LARGE SCALE ANALYSIS] AT MET-1</scope>
    <scope>IDENTIFICATION BY MASS SPECTROMETRY [LARGE SCALE ANALYSIS]</scope>
</reference>
<reference key="12">
    <citation type="journal article" date="2010" name="Sci. Signal.">
        <title>Quantitative phosphoproteomics reveals widespread full phosphorylation site occupancy during mitosis.</title>
        <authorList>
            <person name="Olsen J.V."/>
            <person name="Vermeulen M."/>
            <person name="Santamaria A."/>
            <person name="Kumar C."/>
            <person name="Miller M.L."/>
            <person name="Jensen L.J."/>
            <person name="Gnad F."/>
            <person name="Cox J."/>
            <person name="Jensen T.S."/>
            <person name="Nigg E.A."/>
            <person name="Brunak S."/>
            <person name="Mann M."/>
        </authorList>
    </citation>
    <scope>ACETYLATION [LARGE SCALE ANALYSIS] AT MET-1</scope>
    <scope>PHOSPHORYLATION [LARGE SCALE ANALYSIS] AT THR-9; SER-32 AND SER-59</scope>
    <scope>IDENTIFICATION BY MASS SPECTROMETRY [LARGE SCALE ANALYSIS]</scope>
    <source>
        <tissue>Cervix carcinoma</tissue>
    </source>
</reference>
<reference key="13">
    <citation type="journal article" date="2011" name="BMC Syst. Biol.">
        <title>Initial characterization of the human central proteome.</title>
        <authorList>
            <person name="Burkard T.R."/>
            <person name="Planyavsky M."/>
            <person name="Kaupe I."/>
            <person name="Breitwieser F.P."/>
            <person name="Buerckstuemmer T."/>
            <person name="Bennett K.L."/>
            <person name="Superti-Furga G."/>
            <person name="Colinge J."/>
        </authorList>
    </citation>
    <scope>IDENTIFICATION BY MASS SPECTROMETRY [LARGE SCALE ANALYSIS]</scope>
</reference>
<reference key="14">
    <citation type="journal article" date="2012" name="Mol. Cell. Proteomics">
        <title>Comparative large-scale characterisation of plant vs. mammal proteins reveals similar and idiosyncratic N-alpha acetylation features.</title>
        <authorList>
            <person name="Bienvenut W.V."/>
            <person name="Sumpton D."/>
            <person name="Martinez A."/>
            <person name="Lilla S."/>
            <person name="Espagne C."/>
            <person name="Meinnel T."/>
            <person name="Giglione C."/>
        </authorList>
    </citation>
    <scope>ACETYLATION [LARGE SCALE ANALYSIS] AT MET-1</scope>
    <scope>IDENTIFICATION BY MASS SPECTROMETRY [LARGE SCALE ANALYSIS]</scope>
</reference>
<reference key="15">
    <citation type="journal article" date="2013" name="J. Proteome Res.">
        <title>Toward a comprehensive characterization of a human cancer cell phosphoproteome.</title>
        <authorList>
            <person name="Zhou H."/>
            <person name="Di Palma S."/>
            <person name="Preisinger C."/>
            <person name="Peng M."/>
            <person name="Polat A.N."/>
            <person name="Heck A.J."/>
            <person name="Mohammed S."/>
        </authorList>
    </citation>
    <scope>PHOSPHORYLATION [LARGE SCALE ANALYSIS] AT THR-9 AND SER-59</scope>
    <scope>IDENTIFICATION BY MASS SPECTROMETRY [LARGE SCALE ANALYSIS]</scope>
    <source>
        <tissue>Cervix carcinoma</tissue>
        <tissue>Erythroleukemia</tissue>
    </source>
</reference>
<reference key="16">
    <citation type="journal article" date="2017" name="Nat. Struct. Mol. Biol.">
        <title>Site-specific mapping of the human SUMO proteome reveals co-modification with phosphorylation.</title>
        <authorList>
            <person name="Hendriks I.A."/>
            <person name="Lyon D."/>
            <person name="Young C."/>
            <person name="Jensen L.J."/>
            <person name="Vertegaal A.C."/>
            <person name="Nielsen M.L."/>
        </authorList>
    </citation>
    <scope>SUMOYLATION [LARGE SCALE ANALYSIS] AT LYS-169</scope>
    <scope>IDENTIFICATION BY MASS SPECTROMETRY [LARGE SCALE ANALYSIS]</scope>
</reference>
<reference key="17">
    <citation type="journal article" date="2007" name="Nature">
        <title>Patterns of somatic mutation in human cancer genomes.</title>
        <authorList>
            <person name="Greenman C."/>
            <person name="Stephens P."/>
            <person name="Smith R."/>
            <person name="Dalgliesh G.L."/>
            <person name="Hunter C."/>
            <person name="Bignell G."/>
            <person name="Davies H."/>
            <person name="Teague J."/>
            <person name="Butler A."/>
            <person name="Stevens C."/>
            <person name="Edkins S."/>
            <person name="O'Meara S."/>
            <person name="Vastrik I."/>
            <person name="Schmidt E.E."/>
            <person name="Avis T."/>
            <person name="Barthorpe S."/>
            <person name="Bhamra G."/>
            <person name="Buck G."/>
            <person name="Choudhury B."/>
            <person name="Clements J."/>
            <person name="Cole J."/>
            <person name="Dicks E."/>
            <person name="Forbes S."/>
            <person name="Gray K."/>
            <person name="Halliday K."/>
            <person name="Harrison R."/>
            <person name="Hills K."/>
            <person name="Hinton J."/>
            <person name="Jenkinson A."/>
            <person name="Jones D."/>
            <person name="Menzies A."/>
            <person name="Mironenko T."/>
            <person name="Perry J."/>
            <person name="Raine K."/>
            <person name="Richardson D."/>
            <person name="Shepherd R."/>
            <person name="Small A."/>
            <person name="Tofts C."/>
            <person name="Varian J."/>
            <person name="Webb T."/>
            <person name="West S."/>
            <person name="Widaa S."/>
            <person name="Yates A."/>
            <person name="Cahill D.P."/>
            <person name="Louis D.N."/>
            <person name="Goldstraw P."/>
            <person name="Nicholson A.G."/>
            <person name="Brasseur F."/>
            <person name="Looijenga L."/>
            <person name="Weber B.L."/>
            <person name="Chiew Y.-E."/>
            <person name="DeFazio A."/>
            <person name="Greaves M.F."/>
            <person name="Green A.R."/>
            <person name="Campbell P."/>
            <person name="Birney E."/>
            <person name="Easton D.F."/>
            <person name="Chenevix-Trench G."/>
            <person name="Tan M.-H."/>
            <person name="Khoo S.K."/>
            <person name="Teh B.T."/>
            <person name="Yuen S.T."/>
            <person name="Leung S.Y."/>
            <person name="Wooster R."/>
            <person name="Futreal P.A."/>
            <person name="Stratton M.R."/>
        </authorList>
    </citation>
    <scope>VARIANTS [LARGE SCALE ANALYSIS] SER-107 AND LEU-241</scope>
</reference>
<protein>
    <recommendedName>
        <fullName>Lymphokine-activated killer T-cell-originated protein kinase</fullName>
        <ecNumber>2.7.12.2</ecNumber>
    </recommendedName>
    <alternativeName>
        <fullName>Cancer/testis antigen 84</fullName>
        <shortName>CT84</shortName>
    </alternativeName>
    <alternativeName>
        <fullName>MAPKK-like protein kinase</fullName>
    </alternativeName>
    <alternativeName>
        <fullName>Nori-3</fullName>
    </alternativeName>
    <alternativeName>
        <fullName>PDZ-binding kinase</fullName>
    </alternativeName>
    <alternativeName>
        <fullName>Spermatogenesis-related protein kinase</fullName>
        <shortName>SPK</shortName>
    </alternativeName>
    <alternativeName>
        <fullName>T-LAK cell-originated protein kinase</fullName>
    </alternativeName>
</protein>
<proteinExistence type="evidence at protein level"/>
<name>TOPK_HUMAN</name>
<dbReference type="EC" id="2.7.12.2"/>
<dbReference type="EMBL" id="AB027249">
    <property type="protein sequence ID" value="BAA99576.1"/>
    <property type="molecule type" value="mRNA"/>
</dbReference>
<dbReference type="EMBL" id="AB027250">
    <property type="protein sequence ID" value="BAA99577.1"/>
    <property type="molecule type" value="mRNA"/>
</dbReference>
<dbReference type="EMBL" id="AF189722">
    <property type="protein sequence ID" value="AAF69107.1"/>
    <property type="molecule type" value="mRNA"/>
</dbReference>
<dbReference type="EMBL" id="AF237709">
    <property type="protein sequence ID" value="AAF71521.1"/>
    <property type="molecule type" value="mRNA"/>
</dbReference>
<dbReference type="EMBL" id="AK027291">
    <property type="protein sequence ID" value="BAB55019.1"/>
    <property type="molecule type" value="mRNA"/>
</dbReference>
<dbReference type="EMBL" id="AK301836">
    <property type="protein sequence ID" value="BAG63280.1"/>
    <property type="molecule type" value="mRNA"/>
</dbReference>
<dbReference type="EMBL" id="AC104997">
    <property type="status" value="NOT_ANNOTATED_CDS"/>
    <property type="molecule type" value="Genomic_DNA"/>
</dbReference>
<dbReference type="EMBL" id="CH471080">
    <property type="protein sequence ID" value="EAW63536.1"/>
    <property type="molecule type" value="Genomic_DNA"/>
</dbReference>
<dbReference type="EMBL" id="CH471080">
    <property type="protein sequence ID" value="EAW63537.1"/>
    <property type="molecule type" value="Genomic_DNA"/>
</dbReference>
<dbReference type="EMBL" id="BC015191">
    <property type="protein sequence ID" value="AAH15191.1"/>
    <property type="molecule type" value="mRNA"/>
</dbReference>
<dbReference type="CCDS" id="CCDS6063.1">
    <molecule id="Q96KB5-1"/>
</dbReference>
<dbReference type="CCDS" id="CCDS64858.1">
    <molecule id="Q96KB5-2"/>
</dbReference>
<dbReference type="RefSeq" id="NP_001265874.1">
    <molecule id="Q96KB5-2"/>
    <property type="nucleotide sequence ID" value="NM_001278945.2"/>
</dbReference>
<dbReference type="RefSeq" id="NP_001349969.1">
    <molecule id="Q96KB5-1"/>
    <property type="nucleotide sequence ID" value="NM_001363040.2"/>
</dbReference>
<dbReference type="RefSeq" id="NP_060962.2">
    <molecule id="Q96KB5-1"/>
    <property type="nucleotide sequence ID" value="NM_018492.3"/>
</dbReference>
<dbReference type="RefSeq" id="XP_006716431.1">
    <property type="nucleotide sequence ID" value="XM_006716368.2"/>
</dbReference>
<dbReference type="PDB" id="5J0A">
    <property type="method" value="X-ray"/>
    <property type="resolution" value="2.74 A"/>
    <property type="chains" value="A=23-320, B=19-319"/>
</dbReference>
<dbReference type="PDBsum" id="5J0A"/>
<dbReference type="SMR" id="Q96KB5"/>
<dbReference type="BioGRID" id="120971">
    <property type="interactions" value="163"/>
</dbReference>
<dbReference type="FunCoup" id="Q96KB5">
    <property type="interactions" value="2381"/>
</dbReference>
<dbReference type="IntAct" id="Q96KB5">
    <property type="interactions" value="69"/>
</dbReference>
<dbReference type="MINT" id="Q96KB5"/>
<dbReference type="STRING" id="9606.ENSP00000428489"/>
<dbReference type="BindingDB" id="Q96KB5"/>
<dbReference type="ChEMBL" id="CHEMBL4896"/>
<dbReference type="GuidetoPHARMACOLOGY" id="2140"/>
<dbReference type="GlyGen" id="Q96KB5">
    <property type="glycosylation" value="2 sites, 1 O-linked glycan (2 sites)"/>
</dbReference>
<dbReference type="iPTMnet" id="Q96KB5"/>
<dbReference type="PhosphoSitePlus" id="Q96KB5"/>
<dbReference type="BioMuta" id="PBK"/>
<dbReference type="DMDM" id="83305809"/>
<dbReference type="jPOST" id="Q96KB5"/>
<dbReference type="MassIVE" id="Q96KB5"/>
<dbReference type="PaxDb" id="9606-ENSP00000428489"/>
<dbReference type="PeptideAtlas" id="Q96KB5"/>
<dbReference type="ProteomicsDB" id="5416"/>
<dbReference type="ProteomicsDB" id="77056">
    <molecule id="Q96KB5-1"/>
</dbReference>
<dbReference type="Pumba" id="Q96KB5"/>
<dbReference type="ABCD" id="Q96KB5">
    <property type="antibodies" value="2 sequenced antibodies"/>
</dbReference>
<dbReference type="Antibodypedia" id="1595">
    <property type="antibodies" value="598 antibodies from 37 providers"/>
</dbReference>
<dbReference type="DNASU" id="55872"/>
<dbReference type="Ensembl" id="ENST00000301905.9">
    <molecule id="Q96KB5-1"/>
    <property type="protein sequence ID" value="ENSP00000301905.4"/>
    <property type="gene ID" value="ENSG00000168078.10"/>
</dbReference>
<dbReference type="Ensembl" id="ENST00000522944.5">
    <molecule id="Q96KB5-2"/>
    <property type="protein sequence ID" value="ENSP00000428489.1"/>
    <property type="gene ID" value="ENSG00000168078.10"/>
</dbReference>
<dbReference type="GeneID" id="55872"/>
<dbReference type="KEGG" id="hsa:55872"/>
<dbReference type="MANE-Select" id="ENST00000301905.9">
    <property type="protein sequence ID" value="ENSP00000301905.4"/>
    <property type="RefSeq nucleotide sequence ID" value="NM_018492.4"/>
    <property type="RefSeq protein sequence ID" value="NP_060962.2"/>
</dbReference>
<dbReference type="UCSC" id="uc011lap.4">
    <molecule id="Q96KB5-1"/>
    <property type="organism name" value="human"/>
</dbReference>
<dbReference type="AGR" id="HGNC:18282"/>
<dbReference type="CTD" id="55872"/>
<dbReference type="DisGeNET" id="55872"/>
<dbReference type="GeneCards" id="PBK"/>
<dbReference type="HGNC" id="HGNC:18282">
    <property type="gene designation" value="PBK"/>
</dbReference>
<dbReference type="HPA" id="ENSG00000168078">
    <property type="expression patterns" value="Group enriched (lymphoid tissue, testis)"/>
</dbReference>
<dbReference type="MIM" id="611210">
    <property type="type" value="gene"/>
</dbReference>
<dbReference type="neXtProt" id="NX_Q96KB5"/>
<dbReference type="OpenTargets" id="ENSG00000168078"/>
<dbReference type="PharmGKB" id="PA134925802"/>
<dbReference type="VEuPathDB" id="HostDB:ENSG00000168078"/>
<dbReference type="eggNOG" id="KOG0192">
    <property type="taxonomic scope" value="Eukaryota"/>
</dbReference>
<dbReference type="GeneTree" id="ENSGT00720000108839"/>
<dbReference type="HOGENOM" id="CLU_044128_1_0_1"/>
<dbReference type="InParanoid" id="Q96KB5"/>
<dbReference type="OMA" id="MIMDIAH"/>
<dbReference type="OrthoDB" id="4062651at2759"/>
<dbReference type="PAN-GO" id="Q96KB5">
    <property type="GO annotations" value="4 GO annotations based on evolutionary models"/>
</dbReference>
<dbReference type="PhylomeDB" id="Q96KB5"/>
<dbReference type="TreeFam" id="TF329763"/>
<dbReference type="PathwayCommons" id="Q96KB5"/>
<dbReference type="SignaLink" id="Q96KB5"/>
<dbReference type="SIGNOR" id="Q96KB5"/>
<dbReference type="BioGRID-ORCS" id="55872">
    <property type="hits" value="11 hits in 1189 CRISPR screens"/>
</dbReference>
<dbReference type="ChiTaRS" id="PBK">
    <property type="organism name" value="human"/>
</dbReference>
<dbReference type="GeneWiki" id="PBK_(gene)"/>
<dbReference type="GenomeRNAi" id="55872"/>
<dbReference type="Pharos" id="Q96KB5">
    <property type="development level" value="Tchem"/>
</dbReference>
<dbReference type="PRO" id="PR:Q96KB5"/>
<dbReference type="Proteomes" id="UP000005640">
    <property type="component" value="Chromosome 8"/>
</dbReference>
<dbReference type="RNAct" id="Q96KB5">
    <property type="molecule type" value="protein"/>
</dbReference>
<dbReference type="Bgee" id="ENSG00000168078">
    <property type="expression patterns" value="Expressed in ventricular zone and 129 other cell types or tissues"/>
</dbReference>
<dbReference type="ExpressionAtlas" id="Q96KB5">
    <property type="expression patterns" value="baseline and differential"/>
</dbReference>
<dbReference type="GO" id="GO:0005634">
    <property type="term" value="C:nucleus"/>
    <property type="evidence" value="ECO:0000314"/>
    <property type="project" value="CACAO"/>
</dbReference>
<dbReference type="GO" id="GO:0005524">
    <property type="term" value="F:ATP binding"/>
    <property type="evidence" value="ECO:0007669"/>
    <property type="project" value="UniProtKB-KW"/>
</dbReference>
<dbReference type="GO" id="GO:0004708">
    <property type="term" value="F:MAP kinase kinase activity"/>
    <property type="evidence" value="ECO:0007669"/>
    <property type="project" value="UniProtKB-EC"/>
</dbReference>
<dbReference type="GO" id="GO:0106310">
    <property type="term" value="F:protein serine kinase activity"/>
    <property type="evidence" value="ECO:0007669"/>
    <property type="project" value="RHEA"/>
</dbReference>
<dbReference type="GO" id="GO:0004674">
    <property type="term" value="F:protein serine/threonine kinase activity"/>
    <property type="evidence" value="ECO:0000318"/>
    <property type="project" value="GO_Central"/>
</dbReference>
<dbReference type="GO" id="GO:0004713">
    <property type="term" value="F:protein tyrosine kinase activity"/>
    <property type="evidence" value="ECO:0007669"/>
    <property type="project" value="RHEA"/>
</dbReference>
<dbReference type="GO" id="GO:0034644">
    <property type="term" value="P:cellular response to UV"/>
    <property type="evidence" value="ECO:0007669"/>
    <property type="project" value="Ensembl"/>
</dbReference>
<dbReference type="GO" id="GO:0000278">
    <property type="term" value="P:mitotic cell cycle"/>
    <property type="evidence" value="ECO:0000303"/>
    <property type="project" value="UniProtKB"/>
</dbReference>
<dbReference type="GO" id="GO:0050728">
    <property type="term" value="P:negative regulation of inflammatory response"/>
    <property type="evidence" value="ECO:0007669"/>
    <property type="project" value="Ensembl"/>
</dbReference>
<dbReference type="GO" id="GO:0032435">
    <property type="term" value="P:negative regulation of proteasomal ubiquitin-dependent protein catabolic process"/>
    <property type="evidence" value="ECO:0007669"/>
    <property type="project" value="Ensembl"/>
</dbReference>
<dbReference type="GO" id="GO:0032873">
    <property type="term" value="P:negative regulation of stress-activated MAPK cascade"/>
    <property type="evidence" value="ECO:0007669"/>
    <property type="project" value="Ensembl"/>
</dbReference>
<dbReference type="GO" id="GO:0043161">
    <property type="term" value="P:proteasome-mediated ubiquitin-dependent protein catabolic process"/>
    <property type="evidence" value="ECO:0007669"/>
    <property type="project" value="Ensembl"/>
</dbReference>
<dbReference type="GO" id="GO:0051403">
    <property type="term" value="P:stress-activated MAPK cascade"/>
    <property type="evidence" value="ECO:0000318"/>
    <property type="project" value="GO_Central"/>
</dbReference>
<dbReference type="CDD" id="cd14001">
    <property type="entry name" value="PKc_TOPK"/>
    <property type="match status" value="1"/>
</dbReference>
<dbReference type="FunFam" id="1.10.510.10:FF:000556">
    <property type="entry name" value="Lymphokine-activated killer T-cell-originated protein kinase"/>
    <property type="match status" value="1"/>
</dbReference>
<dbReference type="Gene3D" id="1.10.510.10">
    <property type="entry name" value="Transferase(Phosphotransferase) domain 1"/>
    <property type="match status" value="1"/>
</dbReference>
<dbReference type="InterPro" id="IPR011009">
    <property type="entry name" value="Kinase-like_dom_sf"/>
</dbReference>
<dbReference type="InterPro" id="IPR041989">
    <property type="entry name" value="PKc_TOPK"/>
</dbReference>
<dbReference type="InterPro" id="IPR000719">
    <property type="entry name" value="Prot_kinase_dom"/>
</dbReference>
<dbReference type="InterPro" id="IPR008271">
    <property type="entry name" value="Ser/Thr_kinase_AS"/>
</dbReference>
<dbReference type="PANTHER" id="PTHR43289:SF14">
    <property type="entry name" value="LYMPHOKINE-ACTIVATED KILLER T-CELL-ORIGINATED PROTEIN KINASE"/>
    <property type="match status" value="1"/>
</dbReference>
<dbReference type="PANTHER" id="PTHR43289">
    <property type="entry name" value="MITOGEN-ACTIVATED PROTEIN KINASE KINASE KINASE 20-RELATED"/>
    <property type="match status" value="1"/>
</dbReference>
<dbReference type="Pfam" id="PF00069">
    <property type="entry name" value="Pkinase"/>
    <property type="match status" value="1"/>
</dbReference>
<dbReference type="SMART" id="SM00220">
    <property type="entry name" value="S_TKc"/>
    <property type="match status" value="1"/>
</dbReference>
<dbReference type="SUPFAM" id="SSF56112">
    <property type="entry name" value="Protein kinase-like (PK-like)"/>
    <property type="match status" value="1"/>
</dbReference>
<dbReference type="PROSITE" id="PS50011">
    <property type="entry name" value="PROTEIN_KINASE_DOM"/>
    <property type="match status" value="1"/>
</dbReference>
<dbReference type="PROSITE" id="PS00108">
    <property type="entry name" value="PROTEIN_KINASE_ST"/>
    <property type="match status" value="1"/>
</dbReference>
<feature type="chain" id="PRO_0000086763" description="Lymphokine-activated killer T-cell-originated protein kinase">
    <location>
        <begin position="1"/>
        <end position="322"/>
    </location>
</feature>
<feature type="domain" description="Protein kinase" evidence="2">
    <location>
        <begin position="32"/>
        <end position="322"/>
    </location>
</feature>
<feature type="region of interest" description="PDZ-interaction">
    <location>
        <begin position="320"/>
        <end position="322"/>
    </location>
</feature>
<feature type="active site" description="Proton acceptor" evidence="2 3">
    <location>
        <position position="167"/>
    </location>
</feature>
<feature type="binding site" evidence="2">
    <location>
        <begin position="38"/>
        <end position="46"/>
    </location>
    <ligand>
        <name>ATP</name>
        <dbReference type="ChEBI" id="CHEBI:30616"/>
    </ligand>
</feature>
<feature type="binding site" evidence="2">
    <location>
        <position position="64"/>
    </location>
    <ligand>
        <name>ATP</name>
        <dbReference type="ChEBI" id="CHEBI:30616"/>
    </ligand>
</feature>
<feature type="modified residue" description="N-acetylmethionine" evidence="13 14 15">
    <location>
        <position position="1"/>
    </location>
</feature>
<feature type="modified residue" description="Phosphothreonine" evidence="14 16">
    <location>
        <position position="9"/>
    </location>
</feature>
<feature type="modified residue" description="Phosphothreonine" evidence="12">
    <location>
        <position position="24"/>
    </location>
</feature>
<feature type="modified residue" description="Phosphoserine" evidence="12 14">
    <location>
        <position position="32"/>
    </location>
</feature>
<feature type="modified residue" description="Phosphoserine" evidence="12 14 16">
    <location>
        <position position="59"/>
    </location>
</feature>
<feature type="cross-link" description="Glycyl lysine isopeptide (Lys-Gly) (interchain with G-Cter in SUMO2)" evidence="17">
    <location>
        <position position="169"/>
    </location>
</feature>
<feature type="splice variant" id="VSP_055269" description="In isoform 2." evidence="10">
    <original>T</original>
    <variation>TAPAFITILLVS</variation>
    <location>
        <position position="198"/>
    </location>
</feature>
<feature type="sequence variant" id="VAR_021162" description="In dbSNP:rs3779620." evidence="4 6 7 8">
    <original>N</original>
    <variation>S</variation>
    <location>
        <position position="107"/>
    </location>
</feature>
<feature type="sequence variant" id="VAR_051676" description="In dbSNP:rs17057901.">
    <original>E</original>
    <variation>D</variation>
    <location>
        <position position="220"/>
    </location>
</feature>
<feature type="sequence variant" id="VAR_041234" description="In dbSNP:rs36086402." evidence="8">
    <original>M</original>
    <variation>L</variation>
    <location>
        <position position="241"/>
    </location>
</feature>
<feature type="mutagenesis site" description="TP53-binding." evidence="9">
    <original>T</original>
    <variation>E</variation>
    <location>
        <position position="9"/>
    </location>
</feature>
<feature type="mutagenesis site" description="Loss of activity." evidence="4">
    <original>KK</original>
    <variation>AA</variation>
    <location>
        <begin position="64"/>
        <end position="65"/>
    </location>
</feature>
<feature type="mutagenesis site" description="Decrease in the binding to DLG1." evidence="4">
    <original>T</original>
    <variation>A</variation>
    <location>
        <position position="320"/>
    </location>
</feature>
<feature type="mutagenesis site" description="Decrease in the binding to DLG1." evidence="4">
    <original>V</original>
    <variation>A</variation>
    <location>
        <position position="322"/>
    </location>
</feature>
<feature type="sequence conflict" description="In Ref. 3; AAF71521." evidence="11" ref="3">
    <original>F</original>
    <variation>I</variation>
    <location>
        <position position="34"/>
    </location>
</feature>
<feature type="sequence conflict" description="In Ref. 4; BAB55019." evidence="11" ref="4">
    <original>K</original>
    <variation>E</variation>
    <location>
        <position position="169"/>
    </location>
</feature>
<feature type="sequence conflict" description="In Ref. 4; BAB55019." evidence="11" ref="4">
    <original>D</original>
    <variation>N</variation>
    <location>
        <position position="254"/>
    </location>
</feature>
<feature type="strand" evidence="18">
    <location>
        <begin position="26"/>
        <end position="29"/>
    </location>
</feature>
<feature type="helix" evidence="18">
    <location>
        <begin position="34"/>
        <end position="37"/>
    </location>
</feature>
<feature type="strand" evidence="18">
    <location>
        <begin position="44"/>
        <end position="48"/>
    </location>
</feature>
<feature type="helix" evidence="18">
    <location>
        <begin position="54"/>
        <end position="57"/>
    </location>
</feature>
<feature type="helix" evidence="18">
    <location>
        <begin position="60"/>
        <end position="65"/>
    </location>
</feature>
<feature type="helix" evidence="18">
    <location>
        <begin position="69"/>
        <end position="71"/>
    </location>
</feature>
<feature type="helix" evidence="18">
    <location>
        <begin position="73"/>
        <end position="77"/>
    </location>
</feature>
<feature type="strand" evidence="18">
    <location>
        <begin position="78"/>
        <end position="82"/>
    </location>
</feature>
<feature type="helix" evidence="18">
    <location>
        <begin position="83"/>
        <end position="91"/>
    </location>
</feature>
<feature type="strand" evidence="18">
    <location>
        <begin position="100"/>
        <end position="105"/>
    </location>
</feature>
<feature type="strand" evidence="18">
    <location>
        <begin position="108"/>
        <end position="115"/>
    </location>
</feature>
<feature type="strand" evidence="18">
    <location>
        <begin position="120"/>
        <end position="122"/>
    </location>
</feature>
<feature type="helix" evidence="18">
    <location>
        <begin position="123"/>
        <end position="131"/>
    </location>
</feature>
<feature type="turn" evidence="18">
    <location>
        <begin position="132"/>
        <end position="134"/>
    </location>
</feature>
<feature type="helix" evidence="18">
    <location>
        <begin position="140"/>
        <end position="159"/>
    </location>
</feature>
<feature type="helix" evidence="18">
    <location>
        <begin position="170"/>
        <end position="172"/>
    </location>
</feature>
<feature type="strand" evidence="18">
    <location>
        <begin position="173"/>
        <end position="176"/>
    </location>
</feature>
<feature type="turn" evidence="18">
    <location>
        <begin position="177"/>
        <end position="180"/>
    </location>
</feature>
<feature type="strand" evidence="18">
    <location>
        <begin position="181"/>
        <end position="184"/>
    </location>
</feature>
<feature type="strand" evidence="18">
    <location>
        <begin position="189"/>
        <end position="192"/>
    </location>
</feature>
<feature type="helix" evidence="18">
    <location>
        <begin position="210"/>
        <end position="212"/>
    </location>
</feature>
<feature type="helix" evidence="18">
    <location>
        <begin position="215"/>
        <end position="217"/>
    </location>
</feature>
<feature type="strand" evidence="18">
    <location>
        <begin position="219"/>
        <end position="221"/>
    </location>
</feature>
<feature type="helix" evidence="18">
    <location>
        <begin position="227"/>
        <end position="242"/>
    </location>
</feature>
<feature type="strand" evidence="18">
    <location>
        <begin position="250"/>
        <end position="252"/>
    </location>
</feature>
<feature type="turn" evidence="18">
    <location>
        <begin position="254"/>
        <end position="256"/>
    </location>
</feature>
<feature type="helix" evidence="18">
    <location>
        <begin position="263"/>
        <end position="265"/>
    </location>
</feature>
<feature type="helix" evidence="18">
    <location>
        <begin position="268"/>
        <end position="274"/>
    </location>
</feature>
<feature type="turn" evidence="18">
    <location>
        <begin position="283"/>
        <end position="285"/>
    </location>
</feature>
<feature type="helix" evidence="18">
    <location>
        <begin position="291"/>
        <end position="300"/>
    </location>
</feature>
<feature type="helix" evidence="18">
    <location>
        <begin position="305"/>
        <end position="307"/>
    </location>
</feature>
<feature type="helix" evidence="18">
    <location>
        <begin position="311"/>
        <end position="319"/>
    </location>
</feature>
<evidence type="ECO:0000250" key="1"/>
<evidence type="ECO:0000255" key="2">
    <source>
        <dbReference type="PROSITE-ProRule" id="PRU00159"/>
    </source>
</evidence>
<evidence type="ECO:0000255" key="3">
    <source>
        <dbReference type="PROSITE-ProRule" id="PRU10027"/>
    </source>
</evidence>
<evidence type="ECO:0000269" key="4">
    <source>
    </source>
</evidence>
<evidence type="ECO:0000269" key="5">
    <source>
    </source>
</evidence>
<evidence type="ECO:0000269" key="6">
    <source>
    </source>
</evidence>
<evidence type="ECO:0000269" key="7">
    <source>
    </source>
</evidence>
<evidence type="ECO:0000269" key="8">
    <source>
    </source>
</evidence>
<evidence type="ECO:0000269" key="9">
    <source>
    </source>
</evidence>
<evidence type="ECO:0000303" key="10">
    <source>
    </source>
</evidence>
<evidence type="ECO:0000305" key="11"/>
<evidence type="ECO:0007744" key="12">
    <source>
    </source>
</evidence>
<evidence type="ECO:0007744" key="13">
    <source>
    </source>
</evidence>
<evidence type="ECO:0007744" key="14">
    <source>
    </source>
</evidence>
<evidence type="ECO:0007744" key="15">
    <source>
    </source>
</evidence>
<evidence type="ECO:0007744" key="16">
    <source>
    </source>
</evidence>
<evidence type="ECO:0007744" key="17">
    <source>
    </source>
</evidence>
<evidence type="ECO:0007829" key="18">
    <source>
        <dbReference type="PDB" id="5J0A"/>
    </source>
</evidence>
<accession>Q96KB5</accession>
<accession>B4DX68</accession>
<accession>D3DST2</accession>
<accession>Q9NPD9</accession>
<accession>Q9NYL7</accession>
<accession>Q9NZK6</accession>
<gene>
    <name type="primary">PBK</name>
    <name type="synonym">TOPK</name>
</gene>
<comment type="function">
    <text evidence="5 9">Phosphorylates MAP kinase p38. Seems to be active only in mitosis. May also play a role in the activation of lymphoid cells. When phosphorylated, forms a complex with TP53, leading to TP53 destabilization and attenuation of G2/M checkpoint during doxorubicin-induced DNA damage.</text>
</comment>
<comment type="catalytic activity">
    <reaction>
        <text>L-seryl-[protein] + ATP = O-phospho-L-seryl-[protein] + ADP + H(+)</text>
        <dbReference type="Rhea" id="RHEA:17989"/>
        <dbReference type="Rhea" id="RHEA-COMP:9863"/>
        <dbReference type="Rhea" id="RHEA-COMP:11604"/>
        <dbReference type="ChEBI" id="CHEBI:15378"/>
        <dbReference type="ChEBI" id="CHEBI:29999"/>
        <dbReference type="ChEBI" id="CHEBI:30616"/>
        <dbReference type="ChEBI" id="CHEBI:83421"/>
        <dbReference type="ChEBI" id="CHEBI:456216"/>
        <dbReference type="EC" id="2.7.12.2"/>
    </reaction>
</comment>
<comment type="catalytic activity">
    <reaction>
        <text>L-threonyl-[protein] + ATP = O-phospho-L-threonyl-[protein] + ADP + H(+)</text>
        <dbReference type="Rhea" id="RHEA:46608"/>
        <dbReference type="Rhea" id="RHEA-COMP:11060"/>
        <dbReference type="Rhea" id="RHEA-COMP:11605"/>
        <dbReference type="ChEBI" id="CHEBI:15378"/>
        <dbReference type="ChEBI" id="CHEBI:30013"/>
        <dbReference type="ChEBI" id="CHEBI:30616"/>
        <dbReference type="ChEBI" id="CHEBI:61977"/>
        <dbReference type="ChEBI" id="CHEBI:456216"/>
        <dbReference type="EC" id="2.7.12.2"/>
    </reaction>
</comment>
<comment type="catalytic activity">
    <reaction>
        <text>L-tyrosyl-[protein] + ATP = O-phospho-L-tyrosyl-[protein] + ADP + H(+)</text>
        <dbReference type="Rhea" id="RHEA:10596"/>
        <dbReference type="Rhea" id="RHEA-COMP:10136"/>
        <dbReference type="Rhea" id="RHEA-COMP:20101"/>
        <dbReference type="ChEBI" id="CHEBI:15378"/>
        <dbReference type="ChEBI" id="CHEBI:30616"/>
        <dbReference type="ChEBI" id="CHEBI:46858"/>
        <dbReference type="ChEBI" id="CHEBI:61978"/>
        <dbReference type="ChEBI" id="CHEBI:456216"/>
        <dbReference type="EC" id="2.7.12.2"/>
    </reaction>
</comment>
<comment type="activity regulation">
    <text evidence="1">Activated by phosphorylation.</text>
</comment>
<comment type="subunit">
    <text evidence="4 9">Interacts with DLG1 and TP53.</text>
</comment>
<comment type="interaction">
    <interactant intactId="EBI-536853">
        <id>Q96KB5</id>
    </interactant>
    <interactant intactId="EBI-365961">
        <id>P10398</id>
        <label>ARAF</label>
    </interactant>
    <organismsDiffer>false</organismsDiffer>
    <experiments>3</experiments>
</comment>
<comment type="interaction">
    <interactant intactId="EBI-536853">
        <id>Q96KB5</id>
    </interactant>
    <interactant intactId="EBI-742054">
        <id>Q96D03</id>
        <label>DDIT4L</label>
    </interactant>
    <organismsDiffer>false</organismsDiffer>
    <experiments>3</experiments>
</comment>
<comment type="interaction">
    <interactant intactId="EBI-536853">
        <id>Q96KB5</id>
    </interactant>
    <interactant intactId="EBI-348259">
        <id>Q96EZ8</id>
        <label>MCRS1</label>
    </interactant>
    <organismsDiffer>false</organismsDiffer>
    <experiments>3</experiments>
</comment>
<comment type="interaction">
    <interactant intactId="EBI-536853">
        <id>Q96KB5</id>
    </interactant>
    <interactant intactId="EBI-366083">
        <id>P04637</id>
        <label>TP53</label>
    </interactant>
    <organismsDiffer>false</organismsDiffer>
    <experiments>7</experiments>
</comment>
<comment type="interaction">
    <interactant intactId="EBI-536853">
        <id>Q96KB5</id>
    </interactant>
    <interactant intactId="EBI-11035148">
        <id>Q8TF50</id>
        <label>ZNF526</label>
    </interactant>
    <organismsDiffer>false</organismsDiffer>
    <experiments>3</experiments>
</comment>
<comment type="alternative products">
    <event type="alternative splicing"/>
    <isoform>
        <id>Q96KB5-1</id>
        <name>1</name>
        <sequence type="displayed"/>
    </isoform>
    <isoform>
        <id>Q96KB5-2</id>
        <name>2</name>
        <sequence type="described" ref="VSP_055269"/>
    </isoform>
</comment>
<comment type="tissue specificity">
    <text evidence="5 6">Expressed in the testis and placenta. In the testis, restrictedly expressed in outer cell layer of seminiferous tubules.</text>
</comment>
<comment type="PTM">
    <text evidence="4 5">Phosphorylated; in a cell-cycle dependent manner at mitosis.</text>
</comment>
<comment type="similarity">
    <text evidence="11">Belongs to the protein kinase superfamily. STE Ser/Thr protein kinase family. MAP kinase kinase subfamily.</text>
</comment>
<keyword id="KW-0002">3D-structure</keyword>
<keyword id="KW-0007">Acetylation</keyword>
<keyword id="KW-0025">Alternative splicing</keyword>
<keyword id="KW-0067">ATP-binding</keyword>
<keyword id="KW-1017">Isopeptide bond</keyword>
<keyword id="KW-0418">Kinase</keyword>
<keyword id="KW-0547">Nucleotide-binding</keyword>
<keyword id="KW-0597">Phosphoprotein</keyword>
<keyword id="KW-1267">Proteomics identification</keyword>
<keyword id="KW-1185">Reference proteome</keyword>
<keyword id="KW-0723">Serine/threonine-protein kinase</keyword>
<keyword id="KW-0808">Transferase</keyword>
<keyword id="KW-0832">Ubl conjugation</keyword>
<sequence>MEGISNFKTPSKLSEKKKSVLCSTPTINIPASPFMQKLGFGTGVNVYLMKRSPRGLSHSPWAVKKINPICNDHYRSVYQKRLMDEAKILKSLHHPNIVGYRAFTEANDGSLCLAMEYGGEKSLNDLIEERYKASQDPFPAAIILKVALNMARGLKYLHQEKKLLHGDIKSSNVVIKGDFETIKICDVGVSLPLDENMTVTDPEACYIGTEPWKPKEAVEENGVITDKADIFAFGLTLWEMMTLSIPHINLSNDDDDEDKTFDESDFDDEAYYAALGTRPPINMEELDESYQKVIELFSVCTNEDPKDRPSAAHIVEALETDV</sequence>